<protein>
    <recommendedName>
        <fullName>Mitogen-activated protein kinase pmk-3</fullName>
        <ecNumber>2.7.11.24</ecNumber>
    </recommendedName>
    <alternativeName>
        <fullName>Stress-activated protein kinase pmk-3</fullName>
    </alternativeName>
    <alternativeName>
        <fullName>p38 MAP kinase 3</fullName>
    </alternativeName>
</protein>
<name>PMK3_CAEEL</name>
<comment type="function">
    <text evidence="5 6 8 9 10">Responds to activation by environmental stress and pro-inflammatory cytokines by phosphorylating downstream targets (PubMed:11703092). Involved in axon regeneration after injury, probably downstream of dlk-1 and mkk-4 and upstream of mak-2 (PubMed:19737525, PubMed:21670305). May phosphorylate mak-2 (PubMed:19737525). Plays a role in cilium length regulation, possibly by reducing rab-5 mediated endocytosis (PubMed:26657059). Plays a role in the formation of muscle connections, also called muscle arm extensions, between the body wall and the motor axons in the dorsal and ventral cord (PubMed:27123983).</text>
</comment>
<comment type="catalytic activity">
    <reaction evidence="5">
        <text>L-seryl-[protein] + ATP = O-phospho-L-seryl-[protein] + ADP + H(+)</text>
        <dbReference type="Rhea" id="RHEA:17989"/>
        <dbReference type="Rhea" id="RHEA-COMP:9863"/>
        <dbReference type="Rhea" id="RHEA-COMP:11604"/>
        <dbReference type="ChEBI" id="CHEBI:15378"/>
        <dbReference type="ChEBI" id="CHEBI:29999"/>
        <dbReference type="ChEBI" id="CHEBI:30616"/>
        <dbReference type="ChEBI" id="CHEBI:83421"/>
        <dbReference type="ChEBI" id="CHEBI:456216"/>
        <dbReference type="EC" id="2.7.11.24"/>
    </reaction>
</comment>
<comment type="catalytic activity">
    <reaction evidence="5">
        <text>L-threonyl-[protein] + ATP = O-phospho-L-threonyl-[protein] + ADP + H(+)</text>
        <dbReference type="Rhea" id="RHEA:46608"/>
        <dbReference type="Rhea" id="RHEA-COMP:11060"/>
        <dbReference type="Rhea" id="RHEA-COMP:11605"/>
        <dbReference type="ChEBI" id="CHEBI:15378"/>
        <dbReference type="ChEBI" id="CHEBI:30013"/>
        <dbReference type="ChEBI" id="CHEBI:30616"/>
        <dbReference type="ChEBI" id="CHEBI:61977"/>
        <dbReference type="ChEBI" id="CHEBI:456216"/>
        <dbReference type="EC" id="2.7.11.24"/>
    </reaction>
</comment>
<comment type="cofactor">
    <cofactor evidence="5">
        <name>Mg(2+)</name>
        <dbReference type="ChEBI" id="CHEBI:18420"/>
    </cofactor>
</comment>
<comment type="activity regulation">
    <text evidence="2">Activated by phosphorylation on threonine and tyrosine.</text>
</comment>
<comment type="subunit">
    <text evidence="6 7 8">Interacts with mak-2 (PubMed:19737525). May interact with vhp-1 (PubMed:21670305). May interact with uev-3 (PubMed:20592265).</text>
</comment>
<comment type="subcellular location">
    <subcellularLocation>
        <location evidence="5 9">Nucleus</location>
    </subcellularLocation>
    <subcellularLocation>
        <location evidence="9">Cytoplasm</location>
    </subcellularLocation>
    <subcellularLocation>
        <location evidence="9">Cell projection</location>
        <location evidence="9">Axon</location>
    </subcellularLocation>
    <subcellularLocation>
        <location evidence="9">Cell projection</location>
        <location evidence="9">Dendrite</location>
    </subcellularLocation>
    <subcellularLocation>
        <location evidence="9">Cell projection</location>
        <location evidence="9">Cilium</location>
    </subcellularLocation>
</comment>
<comment type="tissue specificity">
    <text evidence="5">Expressed throughout the intestine.</text>
</comment>
<comment type="domain">
    <text>The TXY motif contains the threonine and tyrosine residues whose phosphorylation activates the MAP kinases.</text>
</comment>
<comment type="PTM">
    <text evidence="1">Dually phosphorylated on Thr-285 and Tyr-287, which activates the enzyme.</text>
</comment>
<comment type="disruption phenotype">
    <text evidence="10">Weak defect in the extension of body wall muscle connections or arms towards the ventral nerve cord. Double knockout with madd-3 suppresses the muscle arm extension defects, eva-1 and rab-7 expression defects and restores the defect in the recruitment of madd-4 to the muscle membrane in the madd-3 single knockout. Triple knockout with madd-3 and unc-54 results in paralysis (as in the unc-54 single knockout), and suppresses the lethality phenotype in the double madd-3 and unc-54 mutant.</text>
</comment>
<comment type="similarity">
    <text evidence="11">Belongs to the protein kinase superfamily. CMGC Ser/Thr protein kinase family. MAP kinase subfamily.</text>
</comment>
<proteinExistence type="evidence at protein level"/>
<keyword id="KW-0067">ATP-binding</keyword>
<keyword id="KW-0966">Cell projection</keyword>
<keyword id="KW-0963">Cytoplasm</keyword>
<keyword id="KW-0418">Kinase</keyword>
<keyword id="KW-0547">Nucleotide-binding</keyword>
<keyword id="KW-0539">Nucleus</keyword>
<keyword id="KW-0597">Phosphoprotein</keyword>
<keyword id="KW-1185">Reference proteome</keyword>
<keyword id="KW-0723">Serine/threonine-protein kinase</keyword>
<keyword id="KW-0808">Transferase</keyword>
<feature type="chain" id="PRO_0000186305" description="Mitogen-activated protein kinase pmk-3">
    <location>
        <begin position="1"/>
        <end position="474"/>
    </location>
</feature>
<feature type="domain" description="Protein kinase" evidence="3">
    <location>
        <begin position="114"/>
        <end position="419"/>
    </location>
</feature>
<feature type="region of interest" description="Disordered" evidence="4">
    <location>
        <begin position="1"/>
        <end position="90"/>
    </location>
</feature>
<feature type="short sequence motif" description="TXY">
    <location>
        <begin position="285"/>
        <end position="287"/>
    </location>
</feature>
<feature type="compositionally biased region" description="Low complexity" evidence="4">
    <location>
        <begin position="1"/>
        <end position="13"/>
    </location>
</feature>
<feature type="compositionally biased region" description="Polar residues" evidence="4">
    <location>
        <begin position="30"/>
        <end position="48"/>
    </location>
</feature>
<feature type="compositionally biased region" description="Basic and acidic residues" evidence="4">
    <location>
        <begin position="52"/>
        <end position="69"/>
    </location>
</feature>
<feature type="active site" description="Proton acceptor" evidence="3">
    <location>
        <position position="252"/>
    </location>
</feature>
<feature type="binding site" evidence="3">
    <location>
        <begin position="124"/>
        <end position="132"/>
    </location>
    <ligand>
        <name>ATP</name>
        <dbReference type="ChEBI" id="CHEBI:30616"/>
    </ligand>
</feature>
<feature type="binding site" evidence="3">
    <location>
        <position position="150"/>
    </location>
    <ligand>
        <name>ATP</name>
        <dbReference type="ChEBI" id="CHEBI:30616"/>
    </ligand>
</feature>
<feature type="modified residue" description="Phosphothreonine" evidence="1">
    <location>
        <position position="285"/>
    </location>
</feature>
<feature type="modified residue" description="Phosphotyrosine" evidence="1">
    <location>
        <position position="287"/>
    </location>
</feature>
<sequence length="474" mass="54894">MASVPSSSSLPVSHVRRHEDVSTPSAPPTKRSNNQSQPPESYEPNTWLQQQREQEQQKKLAAENIKKQSIEATGNNEMVGEEEEDILSKPCGPHKRRFQFVMIRNITFAIPEGYDVEPNSIEYLGGGSFGNVIKTSAVCRDGLRRYVAIKKMREPFFDPHHARRIFRETKLLQLMRHDNIICALDIYTPDEENDFRDVYVVTEFAGRSLYQILKQQRDYGRRVLTDEHIKFIIYQIIRALKYIHSANIIHRDLKPGNLALTDDSDLMILDFGLARSLEKKDTSLTQYVQTRWYRSPEVIYWKIDSYTNLADMWSLGCIAAELLTGEPLFPGDEPNAQYQRITQLCGSPDEELLTKIENDNSSAIKAVIQSYTTHKRRNFRDVFSAHNPSEDFIDLLEKLLVLDPEKRITVEEAIQHPYLAEFSLPEDEPRADHIFDLDDSQARTRFEWRDAVWKEIMNYKRLSSSPLIPGEADR</sequence>
<dbReference type="EC" id="2.7.11.24"/>
<dbReference type="EMBL" id="FO080126">
    <property type="protein sequence ID" value="CCD61404.1"/>
    <property type="molecule type" value="Genomic_DNA"/>
</dbReference>
<dbReference type="PIR" id="T32642">
    <property type="entry name" value="T32642"/>
</dbReference>
<dbReference type="RefSeq" id="NP_001379550.1">
    <property type="nucleotide sequence ID" value="NM_001392343.1"/>
</dbReference>
<dbReference type="RefSeq" id="NP_501363.1">
    <property type="nucleotide sequence ID" value="NM_068962.4"/>
</dbReference>
<dbReference type="SMR" id="O44514"/>
<dbReference type="BioGRID" id="42723">
    <property type="interactions" value="6"/>
</dbReference>
<dbReference type="DIP" id="DIP-59691N"/>
<dbReference type="FunCoup" id="O44514">
    <property type="interactions" value="250"/>
</dbReference>
<dbReference type="IntAct" id="O44514">
    <property type="interactions" value="1"/>
</dbReference>
<dbReference type="STRING" id="6239.F42G8.4a.1"/>
<dbReference type="iPTMnet" id="O44514"/>
<dbReference type="PaxDb" id="6239-F42G8.4.1"/>
<dbReference type="PeptideAtlas" id="O44514"/>
<dbReference type="EnsemblMetazoa" id="F42G8.4a.1">
    <property type="protein sequence ID" value="F42G8.4a.1"/>
    <property type="gene ID" value="WBGene00004057"/>
</dbReference>
<dbReference type="EnsemblMetazoa" id="F42G8.4a.2">
    <property type="protein sequence ID" value="F42G8.4a.2"/>
    <property type="gene ID" value="WBGene00004057"/>
</dbReference>
<dbReference type="EnsemblMetazoa" id="F42G8.4a.3">
    <property type="protein sequence ID" value="F42G8.4a.3"/>
    <property type="gene ID" value="WBGene00004057"/>
</dbReference>
<dbReference type="GeneID" id="177610"/>
<dbReference type="UCSC" id="F42G8.4.1">
    <property type="organism name" value="c. elegans"/>
</dbReference>
<dbReference type="AGR" id="WB:WBGene00004057"/>
<dbReference type="WormBase" id="F42G8.4a">
    <property type="protein sequence ID" value="CE29318"/>
    <property type="gene ID" value="WBGene00004057"/>
    <property type="gene designation" value="pmk-3"/>
</dbReference>
<dbReference type="eggNOG" id="KOG0660">
    <property type="taxonomic scope" value="Eukaryota"/>
</dbReference>
<dbReference type="InParanoid" id="O44514"/>
<dbReference type="OMA" id="RADHIFD"/>
<dbReference type="OrthoDB" id="192887at2759"/>
<dbReference type="PhylomeDB" id="O44514"/>
<dbReference type="BRENDA" id="2.7.11.24">
    <property type="organism ID" value="1045"/>
</dbReference>
<dbReference type="Reactome" id="R-CEL-168638">
    <property type="pathway name" value="NOD1/2 Signaling Pathway"/>
</dbReference>
<dbReference type="Reactome" id="R-CEL-171007">
    <property type="pathway name" value="p38MAPK events"/>
</dbReference>
<dbReference type="Reactome" id="R-CEL-198753">
    <property type="pathway name" value="ERK/MAPK targets"/>
</dbReference>
<dbReference type="Reactome" id="R-CEL-2559580">
    <property type="pathway name" value="Oxidative Stress Induced Senescence"/>
</dbReference>
<dbReference type="Reactome" id="R-CEL-418592">
    <property type="pathway name" value="ADP signalling through P2Y purinoceptor 1"/>
</dbReference>
<dbReference type="Reactome" id="R-CEL-432142">
    <property type="pathway name" value="Platelet sensitization by LDL"/>
</dbReference>
<dbReference type="Reactome" id="R-CEL-4420097">
    <property type="pathway name" value="VEGFA-VEGFR2 Pathway"/>
</dbReference>
<dbReference type="Reactome" id="R-CEL-450302">
    <property type="pathway name" value="activated TAK1 mediates p38 MAPK activation"/>
</dbReference>
<dbReference type="Reactome" id="R-CEL-450341">
    <property type="pathway name" value="Activation of the AP-1 family of transcription factors"/>
</dbReference>
<dbReference type="Reactome" id="R-CEL-525793">
    <property type="pathway name" value="Myogenesis"/>
</dbReference>
<dbReference type="Reactome" id="R-CEL-5675221">
    <property type="pathway name" value="Negative regulation of MAPK pathway"/>
</dbReference>
<dbReference type="Reactome" id="R-CEL-6798695">
    <property type="pathway name" value="Neutrophil degranulation"/>
</dbReference>
<dbReference type="SignaLink" id="O44514"/>
<dbReference type="PRO" id="PR:O44514"/>
<dbReference type="Proteomes" id="UP000001940">
    <property type="component" value="Chromosome IV"/>
</dbReference>
<dbReference type="Bgee" id="WBGene00004057">
    <property type="expression patterns" value="Expressed in pharyngeal muscle cell (C elegans) and 3 other cell types or tissues"/>
</dbReference>
<dbReference type="ExpressionAtlas" id="O44514">
    <property type="expression patterns" value="baseline and differential"/>
</dbReference>
<dbReference type="GO" id="GO:0030424">
    <property type="term" value="C:axon"/>
    <property type="evidence" value="ECO:0007669"/>
    <property type="project" value="UniProtKB-SubCell"/>
</dbReference>
<dbReference type="GO" id="GO:0005929">
    <property type="term" value="C:cilium"/>
    <property type="evidence" value="ECO:0007669"/>
    <property type="project" value="UniProtKB-SubCell"/>
</dbReference>
<dbReference type="GO" id="GO:0005737">
    <property type="term" value="C:cytoplasm"/>
    <property type="evidence" value="ECO:0000314"/>
    <property type="project" value="WormBase"/>
</dbReference>
<dbReference type="GO" id="GO:0030425">
    <property type="term" value="C:dendrite"/>
    <property type="evidence" value="ECO:0007669"/>
    <property type="project" value="UniProtKB-SubCell"/>
</dbReference>
<dbReference type="GO" id="GO:0005634">
    <property type="term" value="C:nucleus"/>
    <property type="evidence" value="ECO:0000314"/>
    <property type="project" value="UniProtKB"/>
</dbReference>
<dbReference type="GO" id="GO:0005524">
    <property type="term" value="F:ATP binding"/>
    <property type="evidence" value="ECO:0007669"/>
    <property type="project" value="UniProtKB-KW"/>
</dbReference>
<dbReference type="GO" id="GO:0004707">
    <property type="term" value="F:MAP kinase activity"/>
    <property type="evidence" value="ECO:0007669"/>
    <property type="project" value="UniProtKB-EC"/>
</dbReference>
<dbReference type="GO" id="GO:0019901">
    <property type="term" value="F:protein kinase binding"/>
    <property type="evidence" value="ECO:0000353"/>
    <property type="project" value="UniProtKB"/>
</dbReference>
<dbReference type="GO" id="GO:0106310">
    <property type="term" value="F:protein serine kinase activity"/>
    <property type="evidence" value="ECO:0007669"/>
    <property type="project" value="RHEA"/>
</dbReference>
<dbReference type="GO" id="GO:0004674">
    <property type="term" value="F:protein serine/threonine kinase activity"/>
    <property type="evidence" value="ECO:0000314"/>
    <property type="project" value="UniProtKB"/>
</dbReference>
<dbReference type="GO" id="GO:0031103">
    <property type="term" value="P:axon regeneration"/>
    <property type="evidence" value="ECO:0000316"/>
    <property type="project" value="UniProtKB"/>
</dbReference>
<dbReference type="GO" id="GO:0035095">
    <property type="term" value="P:behavioral response to nicotine"/>
    <property type="evidence" value="ECO:0000315"/>
    <property type="project" value="UniProtKB"/>
</dbReference>
<dbReference type="GO" id="GO:0035556">
    <property type="term" value="P:intracellular signal transduction"/>
    <property type="evidence" value="ECO:0000318"/>
    <property type="project" value="GO_Central"/>
</dbReference>
<dbReference type="GO" id="GO:0000165">
    <property type="term" value="P:MAPK cascade"/>
    <property type="evidence" value="ECO:0000315"/>
    <property type="project" value="UniProtKB"/>
</dbReference>
<dbReference type="GO" id="GO:0038066">
    <property type="term" value="P:p38MAPK cascade"/>
    <property type="evidence" value="ECO:0000315"/>
    <property type="project" value="UniProtKB"/>
</dbReference>
<dbReference type="GO" id="GO:0048691">
    <property type="term" value="P:positive regulation of axon extension involved in regeneration"/>
    <property type="evidence" value="ECO:0000315"/>
    <property type="project" value="UniProtKB"/>
</dbReference>
<dbReference type="GO" id="GO:1905868">
    <property type="term" value="P:regulation of 3'-UTR-mediated mRNA stabilization"/>
    <property type="evidence" value="ECO:0000316"/>
    <property type="project" value="UniProtKB"/>
</dbReference>
<dbReference type="GO" id="GO:0048841">
    <property type="term" value="P:regulation of axon extension involved in axon guidance"/>
    <property type="evidence" value="ECO:0000316"/>
    <property type="project" value="UniProtKB"/>
</dbReference>
<dbReference type="GO" id="GO:0050807">
    <property type="term" value="P:regulation of synapse organization"/>
    <property type="evidence" value="ECO:0000316"/>
    <property type="project" value="WormBase"/>
</dbReference>
<dbReference type="GO" id="GO:0006970">
    <property type="term" value="P:response to osmotic stress"/>
    <property type="evidence" value="ECO:0000314"/>
    <property type="project" value="UniProtKB"/>
</dbReference>
<dbReference type="CDD" id="cd07851">
    <property type="entry name" value="STKc_p38"/>
    <property type="match status" value="1"/>
</dbReference>
<dbReference type="FunFam" id="1.10.510.10:FF:000684">
    <property type="entry name" value="Mitogen-activated protein kinase"/>
    <property type="match status" value="1"/>
</dbReference>
<dbReference type="Gene3D" id="3.30.200.20">
    <property type="entry name" value="Phosphorylase Kinase, domain 1"/>
    <property type="match status" value="1"/>
</dbReference>
<dbReference type="Gene3D" id="1.10.510.10">
    <property type="entry name" value="Transferase(Phosphotransferase) domain 1"/>
    <property type="match status" value="1"/>
</dbReference>
<dbReference type="InterPro" id="IPR011009">
    <property type="entry name" value="Kinase-like_dom_sf"/>
</dbReference>
<dbReference type="InterPro" id="IPR050117">
    <property type="entry name" value="MAP_kinase"/>
</dbReference>
<dbReference type="InterPro" id="IPR003527">
    <property type="entry name" value="MAP_kinase_CS"/>
</dbReference>
<dbReference type="InterPro" id="IPR000719">
    <property type="entry name" value="Prot_kinase_dom"/>
</dbReference>
<dbReference type="InterPro" id="IPR017441">
    <property type="entry name" value="Protein_kinase_ATP_BS"/>
</dbReference>
<dbReference type="PANTHER" id="PTHR24055">
    <property type="entry name" value="MITOGEN-ACTIVATED PROTEIN KINASE"/>
    <property type="match status" value="1"/>
</dbReference>
<dbReference type="Pfam" id="PF00069">
    <property type="entry name" value="Pkinase"/>
    <property type="match status" value="1"/>
</dbReference>
<dbReference type="SMART" id="SM00220">
    <property type="entry name" value="S_TKc"/>
    <property type="match status" value="1"/>
</dbReference>
<dbReference type="SUPFAM" id="SSF56112">
    <property type="entry name" value="Protein kinase-like (PK-like)"/>
    <property type="match status" value="1"/>
</dbReference>
<dbReference type="PROSITE" id="PS01351">
    <property type="entry name" value="MAPK"/>
    <property type="match status" value="1"/>
</dbReference>
<dbReference type="PROSITE" id="PS00107">
    <property type="entry name" value="PROTEIN_KINASE_ATP"/>
    <property type="match status" value="1"/>
</dbReference>
<dbReference type="PROSITE" id="PS50011">
    <property type="entry name" value="PROTEIN_KINASE_DOM"/>
    <property type="match status" value="1"/>
</dbReference>
<evidence type="ECO:0000250" key="1"/>
<evidence type="ECO:0000250" key="2">
    <source>
        <dbReference type="UniProtKB" id="Q16539"/>
    </source>
</evidence>
<evidence type="ECO:0000255" key="3">
    <source>
        <dbReference type="PROSITE-ProRule" id="PRU00159"/>
    </source>
</evidence>
<evidence type="ECO:0000256" key="4">
    <source>
        <dbReference type="SAM" id="MobiDB-lite"/>
    </source>
</evidence>
<evidence type="ECO:0000269" key="5">
    <source>
    </source>
</evidence>
<evidence type="ECO:0000269" key="6">
    <source>
    </source>
</evidence>
<evidence type="ECO:0000269" key="7">
    <source>
    </source>
</evidence>
<evidence type="ECO:0000269" key="8">
    <source>
    </source>
</evidence>
<evidence type="ECO:0000269" key="9">
    <source>
    </source>
</evidence>
<evidence type="ECO:0000269" key="10">
    <source>
    </source>
</evidence>
<evidence type="ECO:0000305" key="11"/>
<accession>O44514</accession>
<organism>
    <name type="scientific">Caenorhabditis elegans</name>
    <dbReference type="NCBI Taxonomy" id="6239"/>
    <lineage>
        <taxon>Eukaryota</taxon>
        <taxon>Metazoa</taxon>
        <taxon>Ecdysozoa</taxon>
        <taxon>Nematoda</taxon>
        <taxon>Chromadorea</taxon>
        <taxon>Rhabditida</taxon>
        <taxon>Rhabditina</taxon>
        <taxon>Rhabditomorpha</taxon>
        <taxon>Rhabditoidea</taxon>
        <taxon>Rhabditidae</taxon>
        <taxon>Peloderinae</taxon>
        <taxon>Caenorhabditis</taxon>
    </lineage>
</organism>
<gene>
    <name type="primary">pmk-3</name>
    <name type="ORF">F42G8.4</name>
</gene>
<reference evidence="11" key="1">
    <citation type="journal article" date="2001" name="Mol. Cell Biol. Res. Commun.">
        <title>Isolation and characterization of pmk-(1-3): three p38 homologs in Caenorhabditis elegans.</title>
        <authorList>
            <person name="Berman K."/>
            <person name="McKay J."/>
            <person name="Avery L."/>
            <person name="Cobb M."/>
        </authorList>
    </citation>
    <scope>NUCLEOTIDE SEQUENCE [GENOMIC DNA]</scope>
    <scope>FUNCTION</scope>
    <scope>TISSUE SPECIFICITY</scope>
    <scope>SUBCELLULAR LOCATION</scope>
    <source>
        <strain>Bristol N2</strain>
    </source>
</reference>
<reference key="2">
    <citation type="journal article" date="1998" name="Science">
        <title>Genome sequence of the nematode C. elegans: a platform for investigating biology.</title>
        <authorList>
            <consortium name="The C. elegans sequencing consortium"/>
        </authorList>
    </citation>
    <scope>NUCLEOTIDE SEQUENCE [LARGE SCALE GENOMIC DNA]</scope>
    <source>
        <strain>Bristol N2</strain>
    </source>
</reference>
<reference key="3">
    <citation type="journal article" date="2009" name="Cell">
        <title>The DLK-1 kinase promotes mRNA stability and local translation in C. elegans synapses and axon regeneration.</title>
        <authorList>
            <person name="Yan D."/>
            <person name="Wu Z."/>
            <person name="Chisholm A.D."/>
            <person name="Jin Y."/>
        </authorList>
    </citation>
    <scope>FUNCTION</scope>
    <scope>INTERACTION WITH MAK-2</scope>
</reference>
<reference key="4">
    <citation type="journal article" date="2011" name="Proc. Natl. Acad. Sci. U.S.A.">
        <title>Axon regeneration requires coordinate activation of p38 and JNK MAPK pathways.</title>
        <authorList>
            <person name="Nix P."/>
            <person name="Hisamoto N."/>
            <person name="Matsumoto K."/>
            <person name="Bastiani M."/>
        </authorList>
    </citation>
    <scope>FUNCTION</scope>
    <scope>INTERACTION WITH VHP-1</scope>
</reference>
<reference key="5">
    <citation type="journal article" date="2010" name="Genetics">
        <title>A ubiquitin E2 variant protein acts in axon termination and synaptogenesis in Caenorhabditis elegans.</title>
        <authorList>
            <person name="Trujillo G."/>
            <person name="Nakata K."/>
            <person name="Yan D."/>
            <person name="Maruyama I.N."/>
            <person name="Jin Y."/>
        </authorList>
    </citation>
    <scope>INTERACTION WITH UEV-3</scope>
</reference>
<reference key="6">
    <citation type="journal article" date="2015" name="PLoS Genet.">
        <title>DLK-1/p38 MAP Kinase signaling controls cilium length by regulating RAB-5 mediated endocytosis in Caenorhabditis elegans.</title>
        <authorList>
            <person name="van der Vaart A."/>
            <person name="Rademakers S."/>
            <person name="Jansen G."/>
        </authorList>
    </citation>
    <scope>FUNCTION</scope>
    <scope>SUBCELLULAR LOCATION</scope>
</reference>
<reference key="7">
    <citation type="journal article" date="2016" name="PLoS Genet.">
        <title>The MADD-3 LAMMER kinase interacts with a p38 MAP kinase pathway to regulate the display of the EVA-1 guidance receptor in Caenorhabditis elegans.</title>
        <authorList>
            <person name="D'Souza S.A."/>
            <person name="Rajendran L."/>
            <person name="Bagg R."/>
            <person name="Barbier L."/>
            <person name="van Pel D.M."/>
            <person name="Moshiri H."/>
            <person name="Roy P.J."/>
        </authorList>
    </citation>
    <scope>FUNCTION</scope>
    <scope>DISRUPTION PHENOTYPE</scope>
</reference>